<organism>
    <name type="scientific">Pseudoderopeltis cf. bimaculata JT-2004</name>
    <name type="common">Harlequin cockroach</name>
    <dbReference type="NCBI Taxonomy" id="304880"/>
    <lineage>
        <taxon>Eukaryota</taxon>
        <taxon>Metazoa</taxon>
        <taxon>Ecdysozoa</taxon>
        <taxon>Arthropoda</taxon>
        <taxon>Hexapoda</taxon>
        <taxon>Insecta</taxon>
        <taxon>Pterygota</taxon>
        <taxon>Neoptera</taxon>
        <taxon>Polyneoptera</taxon>
        <taxon>Dictyoptera</taxon>
        <taxon>Blattodea</taxon>
        <taxon>Blattoidea</taxon>
        <taxon>Blattidae</taxon>
        <taxon>Blattinae</taxon>
        <taxon>Pseudoderopeltis</taxon>
    </lineage>
</organism>
<protein>
    <recommendedName>
        <fullName evidence="1">Hypertrehalosaemic factor</fullName>
    </recommendedName>
    <alternativeName>
        <fullName evidence="4">Adipokinetic hormone 1</fullName>
        <shortName evidence="4">PseBi-AKH-1</shortName>
    </alternativeName>
    <alternativeName>
        <fullName evidence="1">Hypertrehalosaemic neuropeptide</fullName>
    </alternativeName>
</protein>
<evidence type="ECO:0000250" key="1">
    <source>
        <dbReference type="UniProtKB" id="P67790"/>
    </source>
</evidence>
<evidence type="ECO:0000255" key="2"/>
<evidence type="ECO:0000269" key="3">
    <source>
    </source>
</evidence>
<evidence type="ECO:0000303" key="4">
    <source>
    </source>
</evidence>
<evidence type="ECO:0000305" key="5"/>
<proteinExistence type="evidence at protein level"/>
<name>HTF_PSEBJ</name>
<comment type="function">
    <text evidence="5">Hypertrehalosaemic factors are neuropeptides that elevate the level of trehalose in the hemolymph (trehalose is the major carbohydrate in the hemolymph of insects).</text>
</comment>
<comment type="subcellular location">
    <subcellularLocation>
        <location evidence="5">Secreted</location>
    </subcellularLocation>
</comment>
<comment type="similarity">
    <text evidence="2">Belongs to the AKH/HRTH/RPCH family.</text>
</comment>
<sequence length="8" mass="991">QVNFSPNW</sequence>
<keyword id="KW-0027">Amidation</keyword>
<keyword id="KW-0903">Direct protein sequencing</keyword>
<keyword id="KW-0372">Hormone</keyword>
<keyword id="KW-0527">Neuropeptide</keyword>
<keyword id="KW-0873">Pyrrolidone carboxylic acid</keyword>
<keyword id="KW-0964">Secreted</keyword>
<reference evidence="5" key="1">
    <citation type="journal article" date="2009" name="BMC Evol. Biol.">
        <title>A proteomic approach for studying insect phylogeny: CAPA peptides of ancient insect taxa (Dictyoptera, Blattoptera) as a test case.</title>
        <authorList>
            <person name="Roth S."/>
            <person name="Fromm B."/>
            <person name="Gaede G."/>
            <person name="Predel R."/>
        </authorList>
    </citation>
    <scope>PROTEIN SEQUENCE</scope>
    <scope>PYROGLUTAMATE FORMATION AT GLN-1</scope>
    <scope>AMIDATION AT TRP-8</scope>
    <source>
        <tissue evidence="3">Corpora cardiaca</tissue>
    </source>
</reference>
<accession>P85752</accession>
<dbReference type="GO" id="GO:0005576">
    <property type="term" value="C:extracellular region"/>
    <property type="evidence" value="ECO:0007669"/>
    <property type="project" value="UniProtKB-SubCell"/>
</dbReference>
<dbReference type="GO" id="GO:0005179">
    <property type="term" value="F:hormone activity"/>
    <property type="evidence" value="ECO:0007669"/>
    <property type="project" value="UniProtKB-KW"/>
</dbReference>
<dbReference type="GO" id="GO:0007218">
    <property type="term" value="P:neuropeptide signaling pathway"/>
    <property type="evidence" value="ECO:0007669"/>
    <property type="project" value="UniProtKB-KW"/>
</dbReference>
<dbReference type="InterPro" id="IPR002047">
    <property type="entry name" value="Adipokinetic_hormone_CS"/>
</dbReference>
<dbReference type="PROSITE" id="PS00256">
    <property type="entry name" value="AKH"/>
    <property type="match status" value="1"/>
</dbReference>
<feature type="peptide" id="PRO_0000378668" description="Hypertrehalosaemic factor" evidence="3">
    <location>
        <begin position="1"/>
        <end position="8"/>
    </location>
</feature>
<feature type="modified residue" description="Pyrrolidone carboxylic acid" evidence="3">
    <location>
        <position position="1"/>
    </location>
</feature>
<feature type="modified residue" description="Tryptophan amide" evidence="3">
    <location>
        <position position="8"/>
    </location>
</feature>